<keyword id="KW-1185">Reference proteome</keyword>
<keyword id="KW-0732">Signal</keyword>
<reference key="1">
    <citation type="journal article" date="1996" name="Microbiology">
        <title>Sequencing of a 65 kb region of the Bacillus subtilis genome containing the lic and cel loci, and creation of a 177 kb contig covering the gnt-sacXY region.</title>
        <authorList>
            <person name="Yoshida K."/>
            <person name="Shindo K."/>
            <person name="Sano H."/>
            <person name="Seki S."/>
            <person name="Fujimura M."/>
            <person name="Yanai N."/>
            <person name="Miwa Y."/>
            <person name="Fujita Y."/>
        </authorList>
    </citation>
    <scope>NUCLEOTIDE SEQUENCE [GENOMIC DNA]</scope>
    <source>
        <strain>168 / BGSC1A1</strain>
    </source>
</reference>
<reference key="2">
    <citation type="journal article" date="1997" name="Nature">
        <title>The complete genome sequence of the Gram-positive bacterium Bacillus subtilis.</title>
        <authorList>
            <person name="Kunst F."/>
            <person name="Ogasawara N."/>
            <person name="Moszer I."/>
            <person name="Albertini A.M."/>
            <person name="Alloni G."/>
            <person name="Azevedo V."/>
            <person name="Bertero M.G."/>
            <person name="Bessieres P."/>
            <person name="Bolotin A."/>
            <person name="Borchert S."/>
            <person name="Borriss R."/>
            <person name="Boursier L."/>
            <person name="Brans A."/>
            <person name="Braun M."/>
            <person name="Brignell S.C."/>
            <person name="Bron S."/>
            <person name="Brouillet S."/>
            <person name="Bruschi C.V."/>
            <person name="Caldwell B."/>
            <person name="Capuano V."/>
            <person name="Carter N.M."/>
            <person name="Choi S.-K."/>
            <person name="Codani J.-J."/>
            <person name="Connerton I.F."/>
            <person name="Cummings N.J."/>
            <person name="Daniel R.A."/>
            <person name="Denizot F."/>
            <person name="Devine K.M."/>
            <person name="Duesterhoeft A."/>
            <person name="Ehrlich S.D."/>
            <person name="Emmerson P.T."/>
            <person name="Entian K.-D."/>
            <person name="Errington J."/>
            <person name="Fabret C."/>
            <person name="Ferrari E."/>
            <person name="Foulger D."/>
            <person name="Fritz C."/>
            <person name="Fujita M."/>
            <person name="Fujita Y."/>
            <person name="Fuma S."/>
            <person name="Galizzi A."/>
            <person name="Galleron N."/>
            <person name="Ghim S.-Y."/>
            <person name="Glaser P."/>
            <person name="Goffeau A."/>
            <person name="Golightly E.J."/>
            <person name="Grandi G."/>
            <person name="Guiseppi G."/>
            <person name="Guy B.J."/>
            <person name="Haga K."/>
            <person name="Haiech J."/>
            <person name="Harwood C.R."/>
            <person name="Henaut A."/>
            <person name="Hilbert H."/>
            <person name="Holsappel S."/>
            <person name="Hosono S."/>
            <person name="Hullo M.-F."/>
            <person name="Itaya M."/>
            <person name="Jones L.-M."/>
            <person name="Joris B."/>
            <person name="Karamata D."/>
            <person name="Kasahara Y."/>
            <person name="Klaerr-Blanchard M."/>
            <person name="Klein C."/>
            <person name="Kobayashi Y."/>
            <person name="Koetter P."/>
            <person name="Koningstein G."/>
            <person name="Krogh S."/>
            <person name="Kumano M."/>
            <person name="Kurita K."/>
            <person name="Lapidus A."/>
            <person name="Lardinois S."/>
            <person name="Lauber J."/>
            <person name="Lazarevic V."/>
            <person name="Lee S.-M."/>
            <person name="Levine A."/>
            <person name="Liu H."/>
            <person name="Masuda S."/>
            <person name="Mauel C."/>
            <person name="Medigue C."/>
            <person name="Medina N."/>
            <person name="Mellado R.P."/>
            <person name="Mizuno M."/>
            <person name="Moestl D."/>
            <person name="Nakai S."/>
            <person name="Noback M."/>
            <person name="Noone D."/>
            <person name="O'Reilly M."/>
            <person name="Ogawa K."/>
            <person name="Ogiwara A."/>
            <person name="Oudega B."/>
            <person name="Park S.-H."/>
            <person name="Parro V."/>
            <person name="Pohl T.M."/>
            <person name="Portetelle D."/>
            <person name="Porwollik S."/>
            <person name="Prescott A.M."/>
            <person name="Presecan E."/>
            <person name="Pujic P."/>
            <person name="Purnelle B."/>
            <person name="Rapoport G."/>
            <person name="Rey M."/>
            <person name="Reynolds S."/>
            <person name="Rieger M."/>
            <person name="Rivolta C."/>
            <person name="Rocha E."/>
            <person name="Roche B."/>
            <person name="Rose M."/>
            <person name="Sadaie Y."/>
            <person name="Sato T."/>
            <person name="Scanlan E."/>
            <person name="Schleich S."/>
            <person name="Schroeter R."/>
            <person name="Scoffone F."/>
            <person name="Sekiguchi J."/>
            <person name="Sekowska A."/>
            <person name="Seror S.J."/>
            <person name="Serror P."/>
            <person name="Shin B.-S."/>
            <person name="Soldo B."/>
            <person name="Sorokin A."/>
            <person name="Tacconi E."/>
            <person name="Takagi T."/>
            <person name="Takahashi H."/>
            <person name="Takemaru K."/>
            <person name="Takeuchi M."/>
            <person name="Tamakoshi A."/>
            <person name="Tanaka T."/>
            <person name="Terpstra P."/>
            <person name="Tognoni A."/>
            <person name="Tosato V."/>
            <person name="Uchiyama S."/>
            <person name="Vandenbol M."/>
            <person name="Vannier F."/>
            <person name="Vassarotti A."/>
            <person name="Viari A."/>
            <person name="Wambutt R."/>
            <person name="Wedler E."/>
            <person name="Wedler H."/>
            <person name="Weitzenegger T."/>
            <person name="Winters P."/>
            <person name="Wipat A."/>
            <person name="Yamamoto H."/>
            <person name="Yamane K."/>
            <person name="Yasumoto K."/>
            <person name="Yata K."/>
            <person name="Yoshida K."/>
            <person name="Yoshikawa H.-F."/>
            <person name="Zumstein E."/>
            <person name="Yoshikawa H."/>
            <person name="Danchin A."/>
        </authorList>
    </citation>
    <scope>NUCLEOTIDE SEQUENCE [LARGE SCALE GENOMIC DNA]</scope>
    <source>
        <strain>168</strain>
    </source>
</reference>
<reference key="3">
    <citation type="submission" date="1993-11" db="EMBL/GenBank/DDBJ databases">
        <authorList>
            <person name="Stuelke J."/>
            <person name="Schnetz K."/>
            <person name="Krieg M."/>
            <person name="Krueger S."/>
            <person name="Hecker M."/>
            <person name="Rak B."/>
        </authorList>
    </citation>
    <scope>NUCLEOTIDE SEQUENCE [GENOMIC DNA] OF 176-226</scope>
    <source>
        <strain>168 / BR151</strain>
    </source>
</reference>
<gene>
    <name type="primary">yxiP</name>
    <name type="synonym">S3B</name>
    <name type="ordered locus">BSU39090</name>
</gene>
<proteinExistence type="inferred from homology"/>
<feature type="signal peptide" evidence="1">
    <location>
        <begin position="1"/>
        <end position="18"/>
    </location>
</feature>
<feature type="chain" id="PRO_0000013745" description="Uncharacterized protein YxiP">
    <location>
        <begin position="19"/>
        <end position="226"/>
    </location>
</feature>
<name>YXIP_BACSU</name>
<sequence>MRRIGLCISLLVTVLVMSACESEGEAQMFADCDQKTVKQTAAKPMSSKKKQDFQALASDRQLAIVFSSMIQVSEAFDYGIGNPEYFVRISMTEEEADIAKENLESIKLENKSLKKQNSEAVALLQKTRNQDMSRIEIQQLTENRAGFFETADSMIKLINQVTPKNAKKTRQQLDQLKKQYTQYSAESIKIMNSIVKKQKADKASFERHLEALLQKQPGQQVRSELY</sequence>
<accession>P42307</accession>
<protein>
    <recommendedName>
        <fullName>Uncharacterized protein YxiP</fullName>
    </recommendedName>
</protein>
<organism>
    <name type="scientific">Bacillus subtilis (strain 168)</name>
    <dbReference type="NCBI Taxonomy" id="224308"/>
    <lineage>
        <taxon>Bacteria</taxon>
        <taxon>Bacillati</taxon>
        <taxon>Bacillota</taxon>
        <taxon>Bacilli</taxon>
        <taxon>Bacillales</taxon>
        <taxon>Bacillaceae</taxon>
        <taxon>Bacillus</taxon>
    </lineage>
</organism>
<evidence type="ECO:0000255" key="1">
    <source>
        <dbReference type="PROSITE-ProRule" id="PRU00303"/>
    </source>
</evidence>
<dbReference type="EMBL" id="D83026">
    <property type="protein sequence ID" value="BAA11695.1"/>
    <property type="molecule type" value="Genomic_DNA"/>
</dbReference>
<dbReference type="EMBL" id="AL009126">
    <property type="protein sequence ID" value="CAB15945.1"/>
    <property type="molecule type" value="Genomic_DNA"/>
</dbReference>
<dbReference type="EMBL" id="Z28340">
    <property type="status" value="NOT_ANNOTATED_CDS"/>
    <property type="molecule type" value="Genomic_DNA"/>
</dbReference>
<dbReference type="PIR" id="C70078">
    <property type="entry name" value="C70078"/>
</dbReference>
<dbReference type="RefSeq" id="NP_391788.1">
    <property type="nucleotide sequence ID" value="NC_000964.3"/>
</dbReference>
<dbReference type="RefSeq" id="WP_010886641.1">
    <property type="nucleotide sequence ID" value="NZ_OZ025638.1"/>
</dbReference>
<dbReference type="SMR" id="P42307"/>
<dbReference type="FunCoup" id="P42307">
    <property type="interactions" value="11"/>
</dbReference>
<dbReference type="STRING" id="224308.BSU39090"/>
<dbReference type="PaxDb" id="224308-BSU39090"/>
<dbReference type="DNASU" id="937473"/>
<dbReference type="EnsemblBacteria" id="CAB15945">
    <property type="protein sequence ID" value="CAB15945"/>
    <property type="gene ID" value="BSU_39090"/>
</dbReference>
<dbReference type="GeneID" id="937473"/>
<dbReference type="KEGG" id="bsu:BSU39090"/>
<dbReference type="PATRIC" id="fig|224308.179.peg.4232"/>
<dbReference type="eggNOG" id="ENOG5030EA7">
    <property type="taxonomic scope" value="Bacteria"/>
</dbReference>
<dbReference type="InParanoid" id="P42307"/>
<dbReference type="OrthoDB" id="2915936at2"/>
<dbReference type="BioCyc" id="BSUB:BSU39090-MONOMER"/>
<dbReference type="Proteomes" id="UP000001570">
    <property type="component" value="Chromosome"/>
</dbReference>
<dbReference type="PROSITE" id="PS51257">
    <property type="entry name" value="PROKAR_LIPOPROTEIN"/>
    <property type="match status" value="1"/>
</dbReference>